<name>RISB_STAA1</name>
<keyword id="KW-0686">Riboflavin biosynthesis</keyword>
<keyword id="KW-0808">Transferase</keyword>
<dbReference type="EC" id="2.5.1.78" evidence="1"/>
<dbReference type="EMBL" id="AJ564300">
    <property type="protein sequence ID" value="CAD91962.1"/>
    <property type="molecule type" value="Genomic_DNA"/>
</dbReference>
<dbReference type="EMBL" id="AP009324">
    <property type="protein sequence ID" value="BAF78636.1"/>
    <property type="molecule type" value="Genomic_DNA"/>
</dbReference>
<dbReference type="SMR" id="A7X3K7"/>
<dbReference type="KEGG" id="saw:SAHV_1753"/>
<dbReference type="HOGENOM" id="CLU_089358_1_1_9"/>
<dbReference type="UniPathway" id="UPA00275">
    <property type="reaction ID" value="UER00404"/>
</dbReference>
<dbReference type="GO" id="GO:0005829">
    <property type="term" value="C:cytosol"/>
    <property type="evidence" value="ECO:0007669"/>
    <property type="project" value="TreeGrafter"/>
</dbReference>
<dbReference type="GO" id="GO:0009349">
    <property type="term" value="C:riboflavin synthase complex"/>
    <property type="evidence" value="ECO:0007669"/>
    <property type="project" value="InterPro"/>
</dbReference>
<dbReference type="GO" id="GO:0000906">
    <property type="term" value="F:6,7-dimethyl-8-ribityllumazine synthase activity"/>
    <property type="evidence" value="ECO:0007669"/>
    <property type="project" value="UniProtKB-UniRule"/>
</dbReference>
<dbReference type="GO" id="GO:0009231">
    <property type="term" value="P:riboflavin biosynthetic process"/>
    <property type="evidence" value="ECO:0007669"/>
    <property type="project" value="UniProtKB-UniRule"/>
</dbReference>
<dbReference type="CDD" id="cd09209">
    <property type="entry name" value="Lumazine_synthase-I"/>
    <property type="match status" value="1"/>
</dbReference>
<dbReference type="FunFam" id="3.40.50.960:FF:000001">
    <property type="entry name" value="6,7-dimethyl-8-ribityllumazine synthase"/>
    <property type="match status" value="1"/>
</dbReference>
<dbReference type="Gene3D" id="3.40.50.960">
    <property type="entry name" value="Lumazine/riboflavin synthase"/>
    <property type="match status" value="1"/>
</dbReference>
<dbReference type="HAMAP" id="MF_00178">
    <property type="entry name" value="Lumazine_synth"/>
    <property type="match status" value="1"/>
</dbReference>
<dbReference type="InterPro" id="IPR034964">
    <property type="entry name" value="LS"/>
</dbReference>
<dbReference type="InterPro" id="IPR002180">
    <property type="entry name" value="LS/RS"/>
</dbReference>
<dbReference type="InterPro" id="IPR036467">
    <property type="entry name" value="LS/RS_sf"/>
</dbReference>
<dbReference type="NCBIfam" id="TIGR00114">
    <property type="entry name" value="lumazine-synth"/>
    <property type="match status" value="1"/>
</dbReference>
<dbReference type="NCBIfam" id="NF000812">
    <property type="entry name" value="PRK00061.1-4"/>
    <property type="match status" value="1"/>
</dbReference>
<dbReference type="PANTHER" id="PTHR21058:SF0">
    <property type="entry name" value="6,7-DIMETHYL-8-RIBITYLLUMAZINE SYNTHASE"/>
    <property type="match status" value="1"/>
</dbReference>
<dbReference type="PANTHER" id="PTHR21058">
    <property type="entry name" value="6,7-DIMETHYL-8-RIBITYLLUMAZINE SYNTHASE DMRL SYNTHASE LUMAZINE SYNTHASE"/>
    <property type="match status" value="1"/>
</dbReference>
<dbReference type="Pfam" id="PF00885">
    <property type="entry name" value="DMRL_synthase"/>
    <property type="match status" value="1"/>
</dbReference>
<dbReference type="SUPFAM" id="SSF52121">
    <property type="entry name" value="Lumazine synthase"/>
    <property type="match status" value="1"/>
</dbReference>
<reference key="1">
    <citation type="journal article" date="2004" name="J. Antimicrob. Chemother.">
        <title>Genetic analysis of 17 genes in Staphylococcus aureus with reduced susceptibility to vancomycin (VISA) and heteroVISA.</title>
        <authorList>
            <person name="Wootton M."/>
            <person name="Avison M.B."/>
            <person name="Bennett P.M."/>
            <person name="Howe R.A."/>
            <person name="MacGowan A.P."/>
            <person name="Walsh T.R."/>
        </authorList>
    </citation>
    <scope>NUCLEOTIDE SEQUENCE [GENOMIC DNA]</scope>
</reference>
<reference key="2">
    <citation type="journal article" date="2008" name="Antimicrob. Agents Chemother.">
        <title>Mutated response regulator graR is responsible for phenotypic conversion of Staphylococcus aureus from heterogeneous vancomycin-intermediate resistance to vancomycin-intermediate resistance.</title>
        <authorList>
            <person name="Neoh H.-M."/>
            <person name="Cui L."/>
            <person name="Yuzawa H."/>
            <person name="Takeuchi F."/>
            <person name="Matsuo M."/>
            <person name="Hiramatsu K."/>
        </authorList>
    </citation>
    <scope>NUCLEOTIDE SEQUENCE [LARGE SCALE GENOMIC DNA]</scope>
    <source>
        <strain>Mu3 / ATCC 700698</strain>
    </source>
</reference>
<evidence type="ECO:0000255" key="1">
    <source>
        <dbReference type="HAMAP-Rule" id="MF_00178"/>
    </source>
</evidence>
<proteinExistence type="inferred from homology"/>
<sequence>MNFEGKLIGKDLKVAIVVSRFNDFITGRLLEGAKDTLIRHDVNEDNIDVAFVPGAFEIPLVAKKLASSGNYDAIITLGCVIRGATSHYDYVCNEVAKGVSKVNDQTNVPVIFGILTTESIEQAVERAGTKAGNKGAEAAVSAIEMANLLKSIKA</sequence>
<comment type="function">
    <text evidence="1">Catalyzes the formation of 6,7-dimethyl-8-ribityllumazine by condensation of 5-amino-6-(D-ribitylamino)uracil with 3,4-dihydroxy-2-butanone 4-phosphate. This is the penultimate step in the biosynthesis of riboflavin.</text>
</comment>
<comment type="catalytic activity">
    <reaction evidence="1">
        <text>(2S)-2-hydroxy-3-oxobutyl phosphate + 5-amino-6-(D-ribitylamino)uracil = 6,7-dimethyl-8-(1-D-ribityl)lumazine + phosphate + 2 H2O + H(+)</text>
        <dbReference type="Rhea" id="RHEA:26152"/>
        <dbReference type="ChEBI" id="CHEBI:15377"/>
        <dbReference type="ChEBI" id="CHEBI:15378"/>
        <dbReference type="ChEBI" id="CHEBI:15934"/>
        <dbReference type="ChEBI" id="CHEBI:43474"/>
        <dbReference type="ChEBI" id="CHEBI:58201"/>
        <dbReference type="ChEBI" id="CHEBI:58830"/>
        <dbReference type="EC" id="2.5.1.78"/>
    </reaction>
</comment>
<comment type="pathway">
    <text evidence="1">Cofactor biosynthesis; riboflavin biosynthesis; riboflavin from 2-hydroxy-3-oxobutyl phosphate and 5-amino-6-(D-ribitylamino)uracil: step 1/2.</text>
</comment>
<comment type="subunit">
    <text evidence="1">Forms an icosahedral capsid composed of 60 subunits, arranged as a dodecamer of pentamers.</text>
</comment>
<comment type="similarity">
    <text evidence="1">Belongs to the DMRL synthase family.</text>
</comment>
<feature type="chain" id="PRO_0000313015" description="6,7-dimethyl-8-ribityllumazine synthase">
    <location>
        <begin position="1"/>
        <end position="154"/>
    </location>
</feature>
<feature type="active site" description="Proton donor" evidence="1">
    <location>
        <position position="87"/>
    </location>
</feature>
<feature type="binding site" evidence="1">
    <location>
        <position position="21"/>
    </location>
    <ligand>
        <name>5-amino-6-(D-ribitylamino)uracil</name>
        <dbReference type="ChEBI" id="CHEBI:15934"/>
    </ligand>
</feature>
<feature type="binding site" evidence="1">
    <location>
        <begin position="55"/>
        <end position="57"/>
    </location>
    <ligand>
        <name>5-amino-6-(D-ribitylamino)uracil</name>
        <dbReference type="ChEBI" id="CHEBI:15934"/>
    </ligand>
</feature>
<feature type="binding site" evidence="1">
    <location>
        <begin position="79"/>
        <end position="81"/>
    </location>
    <ligand>
        <name>5-amino-6-(D-ribitylamino)uracil</name>
        <dbReference type="ChEBI" id="CHEBI:15934"/>
    </ligand>
</feature>
<feature type="binding site" evidence="1">
    <location>
        <begin position="84"/>
        <end position="85"/>
    </location>
    <ligand>
        <name>(2S)-2-hydroxy-3-oxobutyl phosphate</name>
        <dbReference type="ChEBI" id="CHEBI:58830"/>
    </ligand>
</feature>
<feature type="binding site" evidence="1">
    <location>
        <position position="112"/>
    </location>
    <ligand>
        <name>5-amino-6-(D-ribitylamino)uracil</name>
        <dbReference type="ChEBI" id="CHEBI:15934"/>
    </ligand>
</feature>
<feature type="binding site" evidence="1">
    <location>
        <position position="126"/>
    </location>
    <ligand>
        <name>(2S)-2-hydroxy-3-oxobutyl phosphate</name>
        <dbReference type="ChEBI" id="CHEBI:58830"/>
    </ligand>
</feature>
<accession>A7X3K7</accession>
<accession>P61596</accession>
<gene>
    <name evidence="1" type="primary">ribH</name>
    <name type="ordered locus">SAHV_1753</name>
</gene>
<protein>
    <recommendedName>
        <fullName evidence="1">6,7-dimethyl-8-ribityllumazine synthase</fullName>
        <shortName evidence="1">DMRL synthase</shortName>
        <shortName evidence="1">LS</shortName>
        <shortName evidence="1">Lumazine synthase</shortName>
        <ecNumber evidence="1">2.5.1.78</ecNumber>
    </recommendedName>
</protein>
<organism>
    <name type="scientific">Staphylococcus aureus (strain Mu3 / ATCC 700698)</name>
    <dbReference type="NCBI Taxonomy" id="418127"/>
    <lineage>
        <taxon>Bacteria</taxon>
        <taxon>Bacillati</taxon>
        <taxon>Bacillota</taxon>
        <taxon>Bacilli</taxon>
        <taxon>Bacillales</taxon>
        <taxon>Staphylococcaceae</taxon>
        <taxon>Staphylococcus</taxon>
    </lineage>
</organism>